<gene>
    <name type="primary">CZF1</name>
    <name type="ORF">CAWG_03147</name>
</gene>
<feature type="chain" id="PRO_0000114946" description="Zinc finger protein 1">
    <location>
        <begin position="1"/>
        <end position="388"/>
    </location>
</feature>
<feature type="DNA-binding region" description="Zn(2)-C6 fungal-type" evidence="1">
    <location>
        <begin position="318"/>
        <end position="345"/>
    </location>
</feature>
<feature type="region of interest" description="Disordered" evidence="2">
    <location>
        <begin position="1"/>
        <end position="120"/>
    </location>
</feature>
<feature type="region of interest" description="Disordered" evidence="2">
    <location>
        <begin position="157"/>
        <end position="219"/>
    </location>
</feature>
<feature type="region of interest" description="Disordered" evidence="2">
    <location>
        <begin position="236"/>
        <end position="311"/>
    </location>
</feature>
<feature type="region of interest" description="Disordered" evidence="2">
    <location>
        <begin position="348"/>
        <end position="367"/>
    </location>
</feature>
<feature type="compositionally biased region" description="Polar residues" evidence="2">
    <location>
        <begin position="1"/>
        <end position="19"/>
    </location>
</feature>
<feature type="compositionally biased region" description="Low complexity" evidence="2">
    <location>
        <begin position="20"/>
        <end position="38"/>
    </location>
</feature>
<feature type="compositionally biased region" description="Polar residues" evidence="2">
    <location>
        <begin position="52"/>
        <end position="67"/>
    </location>
</feature>
<feature type="compositionally biased region" description="Polar residues" evidence="2">
    <location>
        <begin position="88"/>
        <end position="97"/>
    </location>
</feature>
<feature type="compositionally biased region" description="Low complexity" evidence="2">
    <location>
        <begin position="102"/>
        <end position="120"/>
    </location>
</feature>
<feature type="compositionally biased region" description="Low complexity" evidence="2">
    <location>
        <begin position="157"/>
        <end position="172"/>
    </location>
</feature>
<feature type="compositionally biased region" description="Polar residues" evidence="2">
    <location>
        <begin position="173"/>
        <end position="203"/>
    </location>
</feature>
<feature type="compositionally biased region" description="Low complexity" evidence="2">
    <location>
        <begin position="204"/>
        <end position="217"/>
    </location>
</feature>
<feature type="compositionally biased region" description="Low complexity" evidence="2">
    <location>
        <begin position="236"/>
        <end position="259"/>
    </location>
</feature>
<feature type="compositionally biased region" description="Basic residues" evidence="2">
    <location>
        <begin position="268"/>
        <end position="278"/>
    </location>
</feature>
<feature type="compositionally biased region" description="Polar residues" evidence="2">
    <location>
        <begin position="282"/>
        <end position="294"/>
    </location>
</feature>
<feature type="compositionally biased region" description="Basic and acidic residues" evidence="2">
    <location>
        <begin position="351"/>
        <end position="367"/>
    </location>
</feature>
<sequence>MSSIPNINWNDPNNGKSNTSRQSQPQPQLPSNVSPPNSRAVPTSGSIGGPQYGSSQFSNEYSRNPNTIGGPPFPLQSNQRGYMPNTGYPVQQTAQQRSGDKLQQVHSQQQQQQQQQQQPLYQQYPPQSVGYLAGDVYNPQHQEYVQMNQLPNQHYNLQQRQQAQGQQLKSQLNEQNAMMSASTQQYPVQDFTNPYPNAQNPAEQQQQQQPLRTQSQQWDGYQSQPLYSAAGNTIPSSIQQQIPPQNLSPSEQQQVKQQQPSPPEQGTKKKPGRKPKLRKLSESSSETPQVPKTASSSSSSPTAVNSGKPITKRSRMGCLTCRQRKKRCCETRPRCTECTRLRLNCTWPKPGTEHKNKPKDQKDDENTIEHAEFGRIKVLRGIVEYRSK</sequence>
<accession>P28875</accession>
<accession>C4YGH0</accession>
<dbReference type="EMBL" id="M76586">
    <property type="protein sequence ID" value="AAA34377.2"/>
    <property type="molecule type" value="Genomic_DNA"/>
</dbReference>
<dbReference type="EMBL" id="CH672349">
    <property type="protein sequence ID" value="EEQ44852.1"/>
    <property type="molecule type" value="Genomic_DNA"/>
</dbReference>
<dbReference type="PIR" id="C47211">
    <property type="entry name" value="C47211"/>
</dbReference>
<dbReference type="PIR" id="S27407">
    <property type="entry name" value="S27407"/>
</dbReference>
<dbReference type="SMR" id="P28875"/>
<dbReference type="PaxDb" id="5476-P28875"/>
<dbReference type="VEuPathDB" id="FungiDB:CAWG_03147"/>
<dbReference type="HOGENOM" id="CLU_705961_0_0_1"/>
<dbReference type="OMA" id="LRLNCTW"/>
<dbReference type="OrthoDB" id="9589at766764"/>
<dbReference type="Proteomes" id="UP000001429">
    <property type="component" value="Chromosome 4, Supercontig 1.4"/>
</dbReference>
<dbReference type="GO" id="GO:0005634">
    <property type="term" value="C:nucleus"/>
    <property type="evidence" value="ECO:0007669"/>
    <property type="project" value="UniProtKB-SubCell"/>
</dbReference>
<dbReference type="GO" id="GO:0003677">
    <property type="term" value="F:DNA binding"/>
    <property type="evidence" value="ECO:0007669"/>
    <property type="project" value="UniProtKB-KW"/>
</dbReference>
<dbReference type="GO" id="GO:0000981">
    <property type="term" value="F:DNA-binding transcription factor activity, RNA polymerase II-specific"/>
    <property type="evidence" value="ECO:0007669"/>
    <property type="project" value="InterPro"/>
</dbReference>
<dbReference type="GO" id="GO:0008270">
    <property type="term" value="F:zinc ion binding"/>
    <property type="evidence" value="ECO:0007669"/>
    <property type="project" value="InterPro"/>
</dbReference>
<dbReference type="CDD" id="cd00067">
    <property type="entry name" value="GAL4"/>
    <property type="match status" value="1"/>
</dbReference>
<dbReference type="FunFam" id="4.10.240.10:FF:000085">
    <property type="entry name" value="Zinc cluster transcription factor CZF1"/>
    <property type="match status" value="1"/>
</dbReference>
<dbReference type="Gene3D" id="4.10.240.10">
    <property type="entry name" value="Zn(2)-C6 fungal-type DNA-binding domain"/>
    <property type="match status" value="1"/>
</dbReference>
<dbReference type="InterPro" id="IPR036864">
    <property type="entry name" value="Zn2-C6_fun-type_DNA-bd_sf"/>
</dbReference>
<dbReference type="InterPro" id="IPR001138">
    <property type="entry name" value="Zn2Cys6_DnaBD"/>
</dbReference>
<dbReference type="Pfam" id="PF00172">
    <property type="entry name" value="Zn_clus"/>
    <property type="match status" value="1"/>
</dbReference>
<dbReference type="SMART" id="SM00066">
    <property type="entry name" value="GAL4"/>
    <property type="match status" value="1"/>
</dbReference>
<dbReference type="SUPFAM" id="SSF57701">
    <property type="entry name" value="Zn2/Cys6 DNA-binding domain"/>
    <property type="match status" value="1"/>
</dbReference>
<dbReference type="PROSITE" id="PS00463">
    <property type="entry name" value="ZN2_CY6_FUNGAL_1"/>
    <property type="match status" value="1"/>
</dbReference>
<dbReference type="PROSITE" id="PS50048">
    <property type="entry name" value="ZN2_CY6_FUNGAL_2"/>
    <property type="match status" value="1"/>
</dbReference>
<reference key="1">
    <citation type="journal article" date="1992" name="Proc. Natl. Acad. Sci. U.S.A.">
        <title>Dominant negative selection of heterologous genes: isolation of Candida albicans genes that interfere with Saccharomyces cerevisiae mating factor-induced cell cycle arrest.</title>
        <authorList>
            <person name="Whiteway M."/>
            <person name="Dignard D."/>
            <person name="Thomas D.Y."/>
        </authorList>
    </citation>
    <scope>NUCLEOTIDE SEQUENCE [GENOMIC DNA]</scope>
    <source>
        <strain>WO-1</strain>
    </source>
</reference>
<reference key="2">
    <citation type="journal article" date="2009" name="Nature">
        <title>Evolution of pathogenicity and sexual reproduction in eight Candida genomes.</title>
        <authorList>
            <person name="Butler G."/>
            <person name="Rasmussen M.D."/>
            <person name="Lin M.F."/>
            <person name="Santos M.A.S."/>
            <person name="Sakthikumar S."/>
            <person name="Munro C.A."/>
            <person name="Rheinbay E."/>
            <person name="Grabherr M."/>
            <person name="Forche A."/>
            <person name="Reedy J.L."/>
            <person name="Agrafioti I."/>
            <person name="Arnaud M.B."/>
            <person name="Bates S."/>
            <person name="Brown A.J.P."/>
            <person name="Brunke S."/>
            <person name="Costanzo M.C."/>
            <person name="Fitzpatrick D.A."/>
            <person name="de Groot P.W.J."/>
            <person name="Harris D."/>
            <person name="Hoyer L.L."/>
            <person name="Hube B."/>
            <person name="Klis F.M."/>
            <person name="Kodira C."/>
            <person name="Lennard N."/>
            <person name="Logue M.E."/>
            <person name="Martin R."/>
            <person name="Neiman A.M."/>
            <person name="Nikolaou E."/>
            <person name="Quail M.A."/>
            <person name="Quinn J."/>
            <person name="Santos M.C."/>
            <person name="Schmitzberger F.F."/>
            <person name="Sherlock G."/>
            <person name="Shah P."/>
            <person name="Silverstein K.A.T."/>
            <person name="Skrzypek M.S."/>
            <person name="Soll D."/>
            <person name="Staggs R."/>
            <person name="Stansfield I."/>
            <person name="Stumpf M.P.H."/>
            <person name="Sudbery P.E."/>
            <person name="Srikantha T."/>
            <person name="Zeng Q."/>
            <person name="Berman J."/>
            <person name="Berriman M."/>
            <person name="Heitman J."/>
            <person name="Gow N.A.R."/>
            <person name="Lorenz M.C."/>
            <person name="Birren B.W."/>
            <person name="Kellis M."/>
            <person name="Cuomo C.A."/>
        </authorList>
    </citation>
    <scope>NUCLEOTIDE SEQUENCE [LARGE SCALE GENOMIC DNA]</scope>
    <source>
        <strain>WO-1</strain>
    </source>
</reference>
<organism>
    <name type="scientific">Candida albicans (strain WO-1)</name>
    <name type="common">Yeast</name>
    <dbReference type="NCBI Taxonomy" id="294748"/>
    <lineage>
        <taxon>Eukaryota</taxon>
        <taxon>Fungi</taxon>
        <taxon>Dikarya</taxon>
        <taxon>Ascomycota</taxon>
        <taxon>Saccharomycotina</taxon>
        <taxon>Pichiomycetes</taxon>
        <taxon>Debaryomycetaceae</taxon>
        <taxon>Candida/Lodderomyces clade</taxon>
        <taxon>Candida</taxon>
    </lineage>
</organism>
<name>CZF1_CANAW</name>
<comment type="function">
    <text>Perhaps a regulatory role. May be involved in transcriptional activation.</text>
</comment>
<comment type="subcellular location">
    <subcellularLocation>
        <location evidence="3">Nucleus</location>
    </subcellularLocation>
</comment>
<protein>
    <recommendedName>
        <fullName>Zinc finger protein 1</fullName>
    </recommendedName>
</protein>
<keyword id="KW-0238">DNA-binding</keyword>
<keyword id="KW-0479">Metal-binding</keyword>
<keyword id="KW-0539">Nucleus</keyword>
<keyword id="KW-0804">Transcription</keyword>
<keyword id="KW-0805">Transcription regulation</keyword>
<keyword id="KW-0862">Zinc</keyword>
<evidence type="ECO:0000255" key="1">
    <source>
        <dbReference type="PROSITE-ProRule" id="PRU00227"/>
    </source>
</evidence>
<evidence type="ECO:0000256" key="2">
    <source>
        <dbReference type="SAM" id="MobiDB-lite"/>
    </source>
</evidence>
<evidence type="ECO:0000305" key="3"/>
<proteinExistence type="predicted"/>